<gene>
    <name evidence="1" type="primary">pckA</name>
    <name type="ordered locus">Mnod_5431</name>
</gene>
<protein>
    <recommendedName>
        <fullName evidence="1">Phosphoenolpyruvate carboxykinase (ATP)</fullName>
        <shortName evidence="1">PCK</shortName>
        <shortName evidence="1">PEP carboxykinase</shortName>
        <shortName evidence="1">PEPCK</shortName>
        <ecNumber evidence="1">4.1.1.49</ecNumber>
    </recommendedName>
</protein>
<sequence>MSDIGVFNAAVGADRAGLRNLKRVFWNLEAPGLYEQALQRGEAQLAVGGALVAETGIHTGRSPKDKFVVRDAETEAQVWWDNNGAISPEQFDRLHADFIAHAEGRELFAQDLYGGAEPAHRVRARVFTEFAWHSLFIRNLLIRPERDELATYEPDLTIIDLPSFKADPARHGVRSETMIACDFTRRIMLIGGTSYAGEMKKSVFTYLNYILPQAGVMPMHCSANVGGAGDSALFFGLSGTGKTTLSSDPARALLGDDEHGWSPKGIFNFEGGCYAKTIRLSREAEPEIYATTERFGTVMENVVIDPVTRLPDFDDASRTENTRCAYPLPFIPNASPTGRAGHPKNIVMLTCDAFGVLPPIAKLTGAEAMYHFLSGYTAKVAGTEKGLKGPEATFSTCFGAPFMPRHPSVYGNLLRDLIARHHVDCWLVNTGWTGGGVGTGRRMPIRVTRRLLTAALDGSLAKADFRRDPYFGFAVPTSVPGVEPHILYPVKTWQDKAAFAETAKKLVEMFQANFKRFEAHVDADVRAAEPTMSIAA</sequence>
<dbReference type="EC" id="4.1.1.49" evidence="1"/>
<dbReference type="EMBL" id="CP001349">
    <property type="protein sequence ID" value="ACL60275.1"/>
    <property type="molecule type" value="Genomic_DNA"/>
</dbReference>
<dbReference type="RefSeq" id="WP_015931883.1">
    <property type="nucleotide sequence ID" value="NC_011894.1"/>
</dbReference>
<dbReference type="SMR" id="B8IMT2"/>
<dbReference type="STRING" id="460265.Mnod_5431"/>
<dbReference type="KEGG" id="mno:Mnod_5431"/>
<dbReference type="eggNOG" id="COG1866">
    <property type="taxonomic scope" value="Bacteria"/>
</dbReference>
<dbReference type="HOGENOM" id="CLU_018247_0_1_5"/>
<dbReference type="OrthoDB" id="9806325at2"/>
<dbReference type="UniPathway" id="UPA00138"/>
<dbReference type="Proteomes" id="UP000008207">
    <property type="component" value="Chromosome"/>
</dbReference>
<dbReference type="GO" id="GO:0005829">
    <property type="term" value="C:cytosol"/>
    <property type="evidence" value="ECO:0007669"/>
    <property type="project" value="TreeGrafter"/>
</dbReference>
<dbReference type="GO" id="GO:0005524">
    <property type="term" value="F:ATP binding"/>
    <property type="evidence" value="ECO:0007669"/>
    <property type="project" value="UniProtKB-UniRule"/>
</dbReference>
<dbReference type="GO" id="GO:0046872">
    <property type="term" value="F:metal ion binding"/>
    <property type="evidence" value="ECO:0007669"/>
    <property type="project" value="UniProtKB-KW"/>
</dbReference>
<dbReference type="GO" id="GO:0004612">
    <property type="term" value="F:phosphoenolpyruvate carboxykinase (ATP) activity"/>
    <property type="evidence" value="ECO:0007669"/>
    <property type="project" value="UniProtKB-UniRule"/>
</dbReference>
<dbReference type="GO" id="GO:0006094">
    <property type="term" value="P:gluconeogenesis"/>
    <property type="evidence" value="ECO:0007669"/>
    <property type="project" value="UniProtKB-UniRule"/>
</dbReference>
<dbReference type="CDD" id="cd00484">
    <property type="entry name" value="PEPCK_ATP"/>
    <property type="match status" value="1"/>
</dbReference>
<dbReference type="Gene3D" id="3.90.228.20">
    <property type="match status" value="1"/>
</dbReference>
<dbReference type="Gene3D" id="3.40.449.10">
    <property type="entry name" value="Phosphoenolpyruvate Carboxykinase, domain 1"/>
    <property type="match status" value="1"/>
</dbReference>
<dbReference type="Gene3D" id="2.170.8.10">
    <property type="entry name" value="Phosphoenolpyruvate Carboxykinase, domain 2"/>
    <property type="match status" value="1"/>
</dbReference>
<dbReference type="HAMAP" id="MF_00453">
    <property type="entry name" value="PEPCK_ATP"/>
    <property type="match status" value="1"/>
</dbReference>
<dbReference type="InterPro" id="IPR001272">
    <property type="entry name" value="PEP_carboxykinase_ATP"/>
</dbReference>
<dbReference type="InterPro" id="IPR013035">
    <property type="entry name" value="PEP_carboxykinase_C"/>
</dbReference>
<dbReference type="InterPro" id="IPR008210">
    <property type="entry name" value="PEP_carboxykinase_N"/>
</dbReference>
<dbReference type="NCBIfam" id="TIGR00224">
    <property type="entry name" value="pckA"/>
    <property type="match status" value="1"/>
</dbReference>
<dbReference type="NCBIfam" id="NF006820">
    <property type="entry name" value="PRK09344.1-2"/>
    <property type="match status" value="1"/>
</dbReference>
<dbReference type="NCBIfam" id="NF006821">
    <property type="entry name" value="PRK09344.1-3"/>
    <property type="match status" value="1"/>
</dbReference>
<dbReference type="NCBIfam" id="NF006822">
    <property type="entry name" value="PRK09344.1-4"/>
    <property type="match status" value="1"/>
</dbReference>
<dbReference type="PANTHER" id="PTHR30031:SF0">
    <property type="entry name" value="PHOSPHOENOLPYRUVATE CARBOXYKINASE (ATP)"/>
    <property type="match status" value="1"/>
</dbReference>
<dbReference type="PANTHER" id="PTHR30031">
    <property type="entry name" value="PHOSPHOENOLPYRUVATE CARBOXYKINASE ATP"/>
    <property type="match status" value="1"/>
</dbReference>
<dbReference type="Pfam" id="PF01293">
    <property type="entry name" value="PEPCK_ATP"/>
    <property type="match status" value="1"/>
</dbReference>
<dbReference type="PIRSF" id="PIRSF006294">
    <property type="entry name" value="PEP_crbxkin"/>
    <property type="match status" value="1"/>
</dbReference>
<dbReference type="SUPFAM" id="SSF68923">
    <property type="entry name" value="PEP carboxykinase N-terminal domain"/>
    <property type="match status" value="1"/>
</dbReference>
<dbReference type="SUPFAM" id="SSF53795">
    <property type="entry name" value="PEP carboxykinase-like"/>
    <property type="match status" value="1"/>
</dbReference>
<name>PCKA_METNO</name>
<feature type="chain" id="PRO_1000192320" description="Phosphoenolpyruvate carboxykinase (ATP)">
    <location>
        <begin position="1"/>
        <end position="536"/>
    </location>
</feature>
<feature type="binding site" evidence="1">
    <location>
        <position position="61"/>
    </location>
    <ligand>
        <name>substrate</name>
    </ligand>
</feature>
<feature type="binding site" evidence="1">
    <location>
        <position position="195"/>
    </location>
    <ligand>
        <name>substrate</name>
    </ligand>
</feature>
<feature type="binding site" evidence="1">
    <location>
        <position position="201"/>
    </location>
    <ligand>
        <name>ATP</name>
        <dbReference type="ChEBI" id="CHEBI:30616"/>
    </ligand>
</feature>
<feature type="binding site" evidence="1">
    <location>
        <position position="201"/>
    </location>
    <ligand>
        <name>Mn(2+)</name>
        <dbReference type="ChEBI" id="CHEBI:29035"/>
    </ligand>
</feature>
<feature type="binding site" evidence="1">
    <location>
        <position position="201"/>
    </location>
    <ligand>
        <name>substrate</name>
    </ligand>
</feature>
<feature type="binding site" evidence="1">
    <location>
        <position position="220"/>
    </location>
    <ligand>
        <name>ATP</name>
        <dbReference type="ChEBI" id="CHEBI:30616"/>
    </ligand>
</feature>
<feature type="binding site" evidence="1">
    <location>
        <position position="220"/>
    </location>
    <ligand>
        <name>Mn(2+)</name>
        <dbReference type="ChEBI" id="CHEBI:29035"/>
    </ligand>
</feature>
<feature type="binding site" evidence="1">
    <location>
        <begin position="236"/>
        <end position="244"/>
    </location>
    <ligand>
        <name>ATP</name>
        <dbReference type="ChEBI" id="CHEBI:30616"/>
    </ligand>
</feature>
<feature type="binding site" evidence="1">
    <location>
        <position position="257"/>
    </location>
    <ligand>
        <name>Mn(2+)</name>
        <dbReference type="ChEBI" id="CHEBI:29035"/>
    </ligand>
</feature>
<feature type="binding site" evidence="1">
    <location>
        <position position="285"/>
    </location>
    <ligand>
        <name>ATP</name>
        <dbReference type="ChEBI" id="CHEBI:30616"/>
    </ligand>
</feature>
<feature type="binding site" evidence="1">
    <location>
        <position position="323"/>
    </location>
    <ligand>
        <name>ATP</name>
        <dbReference type="ChEBI" id="CHEBI:30616"/>
    </ligand>
</feature>
<feature type="binding site" evidence="1">
    <location>
        <position position="323"/>
    </location>
    <ligand>
        <name>substrate</name>
    </ligand>
</feature>
<feature type="binding site" evidence="1">
    <location>
        <position position="448"/>
    </location>
    <ligand>
        <name>ATP</name>
        <dbReference type="ChEBI" id="CHEBI:30616"/>
    </ligand>
</feature>
<comment type="function">
    <text evidence="1">Involved in the gluconeogenesis. Catalyzes the conversion of oxaloacetate (OAA) to phosphoenolpyruvate (PEP) through direct phosphoryl transfer between the nucleoside triphosphate and OAA.</text>
</comment>
<comment type="catalytic activity">
    <reaction evidence="1">
        <text>oxaloacetate + ATP = phosphoenolpyruvate + ADP + CO2</text>
        <dbReference type="Rhea" id="RHEA:18617"/>
        <dbReference type="ChEBI" id="CHEBI:16452"/>
        <dbReference type="ChEBI" id="CHEBI:16526"/>
        <dbReference type="ChEBI" id="CHEBI:30616"/>
        <dbReference type="ChEBI" id="CHEBI:58702"/>
        <dbReference type="ChEBI" id="CHEBI:456216"/>
        <dbReference type="EC" id="4.1.1.49"/>
    </reaction>
</comment>
<comment type="cofactor">
    <cofactor evidence="1">
        <name>Mn(2+)</name>
        <dbReference type="ChEBI" id="CHEBI:29035"/>
    </cofactor>
    <text evidence="1">Binds 1 Mn(2+) ion per subunit.</text>
</comment>
<comment type="pathway">
    <text evidence="1">Carbohydrate biosynthesis; gluconeogenesis.</text>
</comment>
<comment type="subcellular location">
    <subcellularLocation>
        <location evidence="1">Cytoplasm</location>
    </subcellularLocation>
</comment>
<comment type="similarity">
    <text evidence="1">Belongs to the phosphoenolpyruvate carboxykinase (ATP) family.</text>
</comment>
<evidence type="ECO:0000255" key="1">
    <source>
        <dbReference type="HAMAP-Rule" id="MF_00453"/>
    </source>
</evidence>
<organism>
    <name type="scientific">Methylobacterium nodulans (strain LMG 21967 / CNCM I-2342 / ORS 2060)</name>
    <dbReference type="NCBI Taxonomy" id="460265"/>
    <lineage>
        <taxon>Bacteria</taxon>
        <taxon>Pseudomonadati</taxon>
        <taxon>Pseudomonadota</taxon>
        <taxon>Alphaproteobacteria</taxon>
        <taxon>Hyphomicrobiales</taxon>
        <taxon>Methylobacteriaceae</taxon>
        <taxon>Methylobacterium</taxon>
    </lineage>
</organism>
<reference key="1">
    <citation type="submission" date="2009-01" db="EMBL/GenBank/DDBJ databases">
        <title>Complete sequence of chromosome of Methylobacterium nodulans ORS 2060.</title>
        <authorList>
            <consortium name="US DOE Joint Genome Institute"/>
            <person name="Lucas S."/>
            <person name="Copeland A."/>
            <person name="Lapidus A."/>
            <person name="Glavina del Rio T."/>
            <person name="Dalin E."/>
            <person name="Tice H."/>
            <person name="Bruce D."/>
            <person name="Goodwin L."/>
            <person name="Pitluck S."/>
            <person name="Sims D."/>
            <person name="Brettin T."/>
            <person name="Detter J.C."/>
            <person name="Han C."/>
            <person name="Larimer F."/>
            <person name="Land M."/>
            <person name="Hauser L."/>
            <person name="Kyrpides N."/>
            <person name="Ivanova N."/>
            <person name="Marx C.J."/>
            <person name="Richardson P."/>
        </authorList>
    </citation>
    <scope>NUCLEOTIDE SEQUENCE [LARGE SCALE GENOMIC DNA]</scope>
    <source>
        <strain>LMG 21967 / CNCM I-2342 / ORS 2060</strain>
    </source>
</reference>
<proteinExistence type="inferred from homology"/>
<accession>B8IMT2</accession>
<keyword id="KW-0067">ATP-binding</keyword>
<keyword id="KW-0963">Cytoplasm</keyword>
<keyword id="KW-0210">Decarboxylase</keyword>
<keyword id="KW-0312">Gluconeogenesis</keyword>
<keyword id="KW-0456">Lyase</keyword>
<keyword id="KW-0464">Manganese</keyword>
<keyword id="KW-0479">Metal-binding</keyword>
<keyword id="KW-0547">Nucleotide-binding</keyword>
<keyword id="KW-1185">Reference proteome</keyword>